<dbReference type="EC" id="2.7.11.1" evidence="7"/>
<dbReference type="EMBL" id="X99696">
    <property type="protein sequence ID" value="CAA68027.1"/>
    <property type="molecule type" value="mRNA"/>
</dbReference>
<dbReference type="EMBL" id="AF019927">
    <property type="protein sequence ID" value="AAB71545.1"/>
    <property type="molecule type" value="mRNA"/>
</dbReference>
<dbReference type="EMBL" id="AC068143">
    <property type="protein sequence ID" value="AAF82167.1"/>
    <property type="molecule type" value="Genomic_DNA"/>
</dbReference>
<dbReference type="EMBL" id="CP002684">
    <property type="protein sequence ID" value="AEE27980.1"/>
    <property type="molecule type" value="Genomic_DNA"/>
</dbReference>
<dbReference type="EMBL" id="CP002684">
    <property type="protein sequence ID" value="AEE27981.1"/>
    <property type="molecule type" value="Genomic_DNA"/>
</dbReference>
<dbReference type="EMBL" id="AY035048">
    <property type="protein sequence ID" value="AAK59553.1"/>
    <property type="molecule type" value="mRNA"/>
</dbReference>
<dbReference type="EMBL" id="AY051053">
    <property type="protein sequence ID" value="AAK93730.1"/>
    <property type="molecule type" value="mRNA"/>
</dbReference>
<dbReference type="PIR" id="S77922">
    <property type="entry name" value="S77922"/>
</dbReference>
<dbReference type="RefSeq" id="NP_172127.1">
    <property type="nucleotide sequence ID" value="NM_100519.3"/>
</dbReference>
<dbReference type="RefSeq" id="NP_973771.1">
    <property type="nucleotide sequence ID" value="NM_202042.3"/>
</dbReference>
<dbReference type="SMR" id="Q39012"/>
<dbReference type="BioGRID" id="22391">
    <property type="interactions" value="14"/>
</dbReference>
<dbReference type="FunCoup" id="Q39012">
    <property type="interactions" value="3767"/>
</dbReference>
<dbReference type="IntAct" id="Q39012">
    <property type="interactions" value="5"/>
</dbReference>
<dbReference type="STRING" id="3702.Q39012"/>
<dbReference type="iPTMnet" id="Q39012"/>
<dbReference type="PaxDb" id="3702-AT1G06390.1"/>
<dbReference type="ProteomicsDB" id="250710"/>
<dbReference type="EnsemblPlants" id="AT1G06390.1">
    <property type="protein sequence ID" value="AT1G06390.1"/>
    <property type="gene ID" value="AT1G06390"/>
</dbReference>
<dbReference type="EnsemblPlants" id="AT1G06390.2">
    <property type="protein sequence ID" value="AT1G06390.2"/>
    <property type="gene ID" value="AT1G06390"/>
</dbReference>
<dbReference type="GeneID" id="837150"/>
<dbReference type="Gramene" id="AT1G06390.1">
    <property type="protein sequence ID" value="AT1G06390.1"/>
    <property type="gene ID" value="AT1G06390"/>
</dbReference>
<dbReference type="Gramene" id="AT1G06390.2">
    <property type="protein sequence ID" value="AT1G06390.2"/>
    <property type="gene ID" value="AT1G06390"/>
</dbReference>
<dbReference type="KEGG" id="ath:AT1G06390"/>
<dbReference type="Araport" id="AT1G06390"/>
<dbReference type="TAIR" id="AT1G06390">
    <property type="gene designation" value="GSK1"/>
</dbReference>
<dbReference type="eggNOG" id="KOG0658">
    <property type="taxonomic scope" value="Eukaryota"/>
</dbReference>
<dbReference type="HOGENOM" id="CLU_000288_181_20_1"/>
<dbReference type="InParanoid" id="Q39012"/>
<dbReference type="OMA" id="AYIHTVH"/>
<dbReference type="PhylomeDB" id="Q39012"/>
<dbReference type="BRENDA" id="2.7.11.26">
    <property type="organism ID" value="399"/>
</dbReference>
<dbReference type="PRO" id="PR:Q39012"/>
<dbReference type="Proteomes" id="UP000006548">
    <property type="component" value="Chromosome 1"/>
</dbReference>
<dbReference type="ExpressionAtlas" id="Q39012">
    <property type="expression patterns" value="baseline and differential"/>
</dbReference>
<dbReference type="GO" id="GO:0005524">
    <property type="term" value="F:ATP binding"/>
    <property type="evidence" value="ECO:0007669"/>
    <property type="project" value="UniProtKB-KW"/>
</dbReference>
<dbReference type="GO" id="GO:0106310">
    <property type="term" value="F:protein serine kinase activity"/>
    <property type="evidence" value="ECO:0007669"/>
    <property type="project" value="RHEA"/>
</dbReference>
<dbReference type="GO" id="GO:0004674">
    <property type="term" value="F:protein serine/threonine kinase activity"/>
    <property type="evidence" value="ECO:0007005"/>
    <property type="project" value="TAIR"/>
</dbReference>
<dbReference type="GO" id="GO:0009742">
    <property type="term" value="P:brassinosteroid mediated signaling pathway"/>
    <property type="evidence" value="ECO:0000353"/>
    <property type="project" value="TAIR"/>
</dbReference>
<dbReference type="GO" id="GO:0042538">
    <property type="term" value="P:hyperosmotic salinity response"/>
    <property type="evidence" value="ECO:0000315"/>
    <property type="project" value="TAIR"/>
</dbReference>
<dbReference type="GO" id="GO:0046777">
    <property type="term" value="P:protein autophosphorylation"/>
    <property type="evidence" value="ECO:0007005"/>
    <property type="project" value="TAIR"/>
</dbReference>
<dbReference type="GO" id="GO:0006468">
    <property type="term" value="P:protein phosphorylation"/>
    <property type="evidence" value="ECO:0000314"/>
    <property type="project" value="TAIR"/>
</dbReference>
<dbReference type="GO" id="GO:0032880">
    <property type="term" value="P:regulation of protein localization"/>
    <property type="evidence" value="ECO:0000314"/>
    <property type="project" value="TAIR"/>
</dbReference>
<dbReference type="CDD" id="cd14137">
    <property type="entry name" value="STKc_GSK3"/>
    <property type="match status" value="1"/>
</dbReference>
<dbReference type="FunFam" id="3.30.200.20:FF:000009">
    <property type="entry name" value="Glycogen synthase kinase-3 beta"/>
    <property type="match status" value="1"/>
</dbReference>
<dbReference type="FunFam" id="1.10.510.10:FF:000082">
    <property type="entry name" value="Shaggy-related protein kinase kappa"/>
    <property type="match status" value="1"/>
</dbReference>
<dbReference type="Gene3D" id="3.30.200.20">
    <property type="entry name" value="Phosphorylase Kinase, domain 1"/>
    <property type="match status" value="1"/>
</dbReference>
<dbReference type="Gene3D" id="1.10.510.10">
    <property type="entry name" value="Transferase(Phosphotransferase) domain 1"/>
    <property type="match status" value="1"/>
</dbReference>
<dbReference type="InterPro" id="IPR050591">
    <property type="entry name" value="GSK-3"/>
</dbReference>
<dbReference type="InterPro" id="IPR011009">
    <property type="entry name" value="Kinase-like_dom_sf"/>
</dbReference>
<dbReference type="InterPro" id="IPR000719">
    <property type="entry name" value="Prot_kinase_dom"/>
</dbReference>
<dbReference type="InterPro" id="IPR017441">
    <property type="entry name" value="Protein_kinase_ATP_BS"/>
</dbReference>
<dbReference type="InterPro" id="IPR008271">
    <property type="entry name" value="Ser/Thr_kinase_AS"/>
</dbReference>
<dbReference type="InterPro" id="IPR039192">
    <property type="entry name" value="STKc_GSK3"/>
</dbReference>
<dbReference type="PANTHER" id="PTHR24057">
    <property type="entry name" value="GLYCOGEN SYNTHASE KINASE-3 ALPHA"/>
    <property type="match status" value="1"/>
</dbReference>
<dbReference type="PANTHER" id="PTHR24057:SF5">
    <property type="entry name" value="SHAGGY-RELATED PROTEIN KINASE IOTA-RELATED"/>
    <property type="match status" value="1"/>
</dbReference>
<dbReference type="Pfam" id="PF00069">
    <property type="entry name" value="Pkinase"/>
    <property type="match status" value="1"/>
</dbReference>
<dbReference type="SMART" id="SM00220">
    <property type="entry name" value="S_TKc"/>
    <property type="match status" value="1"/>
</dbReference>
<dbReference type="SUPFAM" id="SSF56112">
    <property type="entry name" value="Protein kinase-like (PK-like)"/>
    <property type="match status" value="1"/>
</dbReference>
<dbReference type="PROSITE" id="PS00107">
    <property type="entry name" value="PROTEIN_KINASE_ATP"/>
    <property type="match status" value="1"/>
</dbReference>
<dbReference type="PROSITE" id="PS50011">
    <property type="entry name" value="PROTEIN_KINASE_DOM"/>
    <property type="match status" value="1"/>
</dbReference>
<dbReference type="PROSITE" id="PS00108">
    <property type="entry name" value="PROTEIN_KINASE_ST"/>
    <property type="match status" value="1"/>
</dbReference>
<protein>
    <recommendedName>
        <fullName>Shaggy-related protein kinase iota</fullName>
        <ecNumber evidence="7">2.7.11.1</ecNumber>
    </recommendedName>
    <alternativeName>
        <fullName>ASK-iota</fullName>
    </alternativeName>
    <alternativeName>
        <fullName>GSK3/shaggy-related protein kinase 1</fullName>
        <shortName>AtGSK1</shortName>
    </alternativeName>
    <alternativeName>
        <fullName>Protein BIN2-like 2</fullName>
    </alternativeName>
    <alternativeName>
        <fullName>Shaggy-related protein kinase 2-3</fullName>
        <shortName>AtSK2-3</shortName>
    </alternativeName>
    <alternativeName>
        <fullName evidence="9">Shaggy-related protein kinase 22</fullName>
        <shortName evidence="9">AtSK22</shortName>
    </alternativeName>
</protein>
<sequence length="407" mass="46024">MASLPLGPQPHALAPPLQLHDGDALKRRPELDSDKEMSAAVIEGNDAVTGHIISTTIGGKNGEPKQTISYMAERVVGTGSFGIVFQAKCLETGESVAIKKVLQDRRYKNRELQLMRPMDHPNVISLKHCFFSTTSRDELFLNLVMEYVPETLYRVLRHYTSSNQRMPIFYVKLYTYQIFRGLAYIHTVPGVCHRDVKPQNLLVDPLTHQVKLCDFGSAKVLVKGEPNISYICSRYYRAPELIFGATEYTASIDIWSAGCVLAELLLGQPLFPGENSVDQLVEIIKVLGTPTREEIRCMNPNYTDFRFPQIKAHPWHKVFHKRMPPEAIDLASRLLQYSPSLRCTALEACAHPFFNELREPNARLPNGRPLPPLFNFKQELGGASMELINRLIPEHVRRQMSTGLQNS</sequence>
<feature type="initiator methionine" description="Removed" evidence="2">
    <location>
        <position position="1"/>
    </location>
</feature>
<feature type="chain" id="PRO_0000086224" description="Shaggy-related protein kinase iota">
    <location>
        <begin position="2"/>
        <end position="407"/>
    </location>
</feature>
<feature type="domain" description="Protein kinase" evidence="4">
    <location>
        <begin position="70"/>
        <end position="354"/>
    </location>
</feature>
<feature type="region of interest" description="Disordered" evidence="6">
    <location>
        <begin position="1"/>
        <end position="23"/>
    </location>
</feature>
<feature type="compositionally biased region" description="Low complexity" evidence="6">
    <location>
        <begin position="1"/>
        <end position="19"/>
    </location>
</feature>
<feature type="active site" description="Proton acceptor" evidence="4 5">
    <location>
        <position position="195"/>
    </location>
</feature>
<feature type="binding site" evidence="4">
    <location>
        <begin position="76"/>
        <end position="84"/>
    </location>
    <ligand>
        <name>ATP</name>
        <dbReference type="ChEBI" id="CHEBI:30616"/>
    </ligand>
</feature>
<feature type="binding site" evidence="4">
    <location>
        <position position="99"/>
    </location>
    <ligand>
        <name>ATP</name>
        <dbReference type="ChEBI" id="CHEBI:30616"/>
    </ligand>
</feature>
<feature type="modified residue" description="N-acetylalanine" evidence="2">
    <location>
        <position position="2"/>
    </location>
</feature>
<feature type="modified residue" description="Phosphotyrosine" evidence="3">
    <location>
        <position position="230"/>
    </location>
</feature>
<feature type="mutagenesis site" description="Abolishes kinase activity." evidence="7">
    <original>K</original>
    <variation>R</variation>
    <location>
        <position position="99"/>
    </location>
</feature>
<gene>
    <name type="primary">ASK9</name>
    <name type="synonym">BIL2</name>
    <name type="synonym">GSK1</name>
    <name type="synonym">SK2-3</name>
    <name evidence="9" type="synonym">SK22</name>
    <name evidence="11" type="ordered locus">At1g06390</name>
    <name evidence="12" type="ORF">T2D23.9</name>
</gene>
<comment type="function">
    <text evidence="1 7">Phosphorylates BSK1, BSK3, BSK5, BSK6, BSK8 and BSK11 in vitro (PubMed:23496207). May mediate extracellular signals to regulate transcription in differentiating cells (By similarity).</text>
</comment>
<comment type="catalytic activity">
    <reaction evidence="7">
        <text>L-seryl-[protein] + ATP = O-phospho-L-seryl-[protein] + ADP + H(+)</text>
        <dbReference type="Rhea" id="RHEA:17989"/>
        <dbReference type="Rhea" id="RHEA-COMP:9863"/>
        <dbReference type="Rhea" id="RHEA-COMP:11604"/>
        <dbReference type="ChEBI" id="CHEBI:15378"/>
        <dbReference type="ChEBI" id="CHEBI:29999"/>
        <dbReference type="ChEBI" id="CHEBI:30616"/>
        <dbReference type="ChEBI" id="CHEBI:83421"/>
        <dbReference type="ChEBI" id="CHEBI:456216"/>
        <dbReference type="EC" id="2.7.11.1"/>
    </reaction>
</comment>
<comment type="catalytic activity">
    <reaction evidence="7">
        <text>L-threonyl-[protein] + ATP = O-phospho-L-threonyl-[protein] + ADP + H(+)</text>
        <dbReference type="Rhea" id="RHEA:46608"/>
        <dbReference type="Rhea" id="RHEA-COMP:11060"/>
        <dbReference type="Rhea" id="RHEA-COMP:11605"/>
        <dbReference type="ChEBI" id="CHEBI:15378"/>
        <dbReference type="ChEBI" id="CHEBI:30013"/>
        <dbReference type="ChEBI" id="CHEBI:30616"/>
        <dbReference type="ChEBI" id="CHEBI:61977"/>
        <dbReference type="ChEBI" id="CHEBI:456216"/>
        <dbReference type="EC" id="2.7.11.1"/>
    </reaction>
</comment>
<comment type="subunit">
    <text evidence="7 8">Binds to KIB1 (PubMed:28575660). Interacts with BSK6 (PubMed:23496207).</text>
</comment>
<comment type="PTM">
    <text evidence="1">Autophosphorylated mainly on threonine and serine residues.</text>
</comment>
<comment type="similarity">
    <text evidence="10">Belongs to the protein kinase superfamily. CMGC Ser/Thr protein kinase family. GSK-3 subfamily.</text>
</comment>
<evidence type="ECO:0000250" key="1"/>
<evidence type="ECO:0000250" key="2">
    <source>
        <dbReference type="UniProtKB" id="P43288"/>
    </source>
</evidence>
<evidence type="ECO:0000250" key="3">
    <source>
        <dbReference type="UniProtKB" id="Q39011"/>
    </source>
</evidence>
<evidence type="ECO:0000255" key="4">
    <source>
        <dbReference type="PROSITE-ProRule" id="PRU00159"/>
    </source>
</evidence>
<evidence type="ECO:0000255" key="5">
    <source>
        <dbReference type="PROSITE-ProRule" id="PRU10027"/>
    </source>
</evidence>
<evidence type="ECO:0000256" key="6">
    <source>
        <dbReference type="SAM" id="MobiDB-lite"/>
    </source>
</evidence>
<evidence type="ECO:0000269" key="7">
    <source>
    </source>
</evidence>
<evidence type="ECO:0000269" key="8">
    <source>
    </source>
</evidence>
<evidence type="ECO:0000303" key="9">
    <source>
    </source>
</evidence>
<evidence type="ECO:0000305" key="10"/>
<evidence type="ECO:0000312" key="11">
    <source>
        <dbReference type="Araport" id="AT1G06390"/>
    </source>
</evidence>
<evidence type="ECO:0000312" key="12">
    <source>
        <dbReference type="EMBL" id="AAF82167.1"/>
    </source>
</evidence>
<proteinExistence type="evidence at protein level"/>
<keyword id="KW-0007">Acetylation</keyword>
<keyword id="KW-0067">ATP-binding</keyword>
<keyword id="KW-0418">Kinase</keyword>
<keyword id="KW-0547">Nucleotide-binding</keyword>
<keyword id="KW-0597">Phosphoprotein</keyword>
<keyword id="KW-1185">Reference proteome</keyword>
<keyword id="KW-0723">Serine/threonine-protein kinase</keyword>
<keyword id="KW-0808">Transferase</keyword>
<name>KSG9_ARATH</name>
<organism>
    <name type="scientific">Arabidopsis thaliana</name>
    <name type="common">Mouse-ear cress</name>
    <dbReference type="NCBI Taxonomy" id="3702"/>
    <lineage>
        <taxon>Eukaryota</taxon>
        <taxon>Viridiplantae</taxon>
        <taxon>Streptophyta</taxon>
        <taxon>Embryophyta</taxon>
        <taxon>Tracheophyta</taxon>
        <taxon>Spermatophyta</taxon>
        <taxon>Magnoliopsida</taxon>
        <taxon>eudicotyledons</taxon>
        <taxon>Gunneridae</taxon>
        <taxon>Pentapetalae</taxon>
        <taxon>rosids</taxon>
        <taxon>malvids</taxon>
        <taxon>Brassicales</taxon>
        <taxon>Brassicaceae</taxon>
        <taxon>Camelineae</taxon>
        <taxon>Arabidopsis</taxon>
    </lineage>
</organism>
<accession>Q39012</accession>
<reference key="1">
    <citation type="online journal article" date="1997" name="Plant Gene Register">
        <title>Three new cDNAs related to SGG/GSK-3 (SHAGGY/glycogen synthase kinase-3) from Arabidopsis thaliana.</title>
        <authorList>
            <person name="Dornelas M.C."/>
            <person name="Schwebel-Dugue N."/>
            <person name="Thomas M."/>
            <person name="Lecharny A."/>
            <person name="Kreis M."/>
        </authorList>
        <locator>PGR97-008</locator>
    </citation>
    <scope>NUCLEOTIDE SEQUENCE [MRNA]</scope>
    <source>
        <strain>cv. Columbia</strain>
        <tissue>Root</tissue>
    </source>
</reference>
<reference key="2">
    <citation type="submission" date="1997-08" db="EMBL/GenBank/DDBJ databases">
        <authorList>
            <person name="Piao H.L."/>
            <person name="Jang H.J."/>
            <person name="Pih K.T."/>
            <person name="Lim J.H."/>
            <person name="Kang S.G."/>
            <person name="Jin J.B."/>
            <person name="Hwang I."/>
        </authorList>
    </citation>
    <scope>NUCLEOTIDE SEQUENCE [MRNA]</scope>
    <source>
        <strain>cv. Columbia</strain>
    </source>
</reference>
<reference key="3">
    <citation type="journal article" date="2000" name="Nature">
        <title>Sequence and analysis of chromosome 1 of the plant Arabidopsis thaliana.</title>
        <authorList>
            <person name="Theologis A."/>
            <person name="Ecker J.R."/>
            <person name="Palm C.J."/>
            <person name="Federspiel N.A."/>
            <person name="Kaul S."/>
            <person name="White O."/>
            <person name="Alonso J."/>
            <person name="Altafi H."/>
            <person name="Araujo R."/>
            <person name="Bowman C.L."/>
            <person name="Brooks S.Y."/>
            <person name="Buehler E."/>
            <person name="Chan A."/>
            <person name="Chao Q."/>
            <person name="Chen H."/>
            <person name="Cheuk R.F."/>
            <person name="Chin C.W."/>
            <person name="Chung M.K."/>
            <person name="Conn L."/>
            <person name="Conway A.B."/>
            <person name="Conway A.R."/>
            <person name="Creasy T.H."/>
            <person name="Dewar K."/>
            <person name="Dunn P."/>
            <person name="Etgu P."/>
            <person name="Feldblyum T.V."/>
            <person name="Feng J.-D."/>
            <person name="Fong B."/>
            <person name="Fujii C.Y."/>
            <person name="Gill J.E."/>
            <person name="Goldsmith A.D."/>
            <person name="Haas B."/>
            <person name="Hansen N.F."/>
            <person name="Hughes B."/>
            <person name="Huizar L."/>
            <person name="Hunter J.L."/>
            <person name="Jenkins J."/>
            <person name="Johnson-Hopson C."/>
            <person name="Khan S."/>
            <person name="Khaykin E."/>
            <person name="Kim C.J."/>
            <person name="Koo H.L."/>
            <person name="Kremenetskaia I."/>
            <person name="Kurtz D.B."/>
            <person name="Kwan A."/>
            <person name="Lam B."/>
            <person name="Langin-Hooper S."/>
            <person name="Lee A."/>
            <person name="Lee J.M."/>
            <person name="Lenz C.A."/>
            <person name="Li J.H."/>
            <person name="Li Y.-P."/>
            <person name="Lin X."/>
            <person name="Liu S.X."/>
            <person name="Liu Z.A."/>
            <person name="Luros J.S."/>
            <person name="Maiti R."/>
            <person name="Marziali A."/>
            <person name="Militscher J."/>
            <person name="Miranda M."/>
            <person name="Nguyen M."/>
            <person name="Nierman W.C."/>
            <person name="Osborne B.I."/>
            <person name="Pai G."/>
            <person name="Peterson J."/>
            <person name="Pham P.K."/>
            <person name="Rizzo M."/>
            <person name="Rooney T."/>
            <person name="Rowley D."/>
            <person name="Sakano H."/>
            <person name="Salzberg S.L."/>
            <person name="Schwartz J.R."/>
            <person name="Shinn P."/>
            <person name="Southwick A.M."/>
            <person name="Sun H."/>
            <person name="Tallon L.J."/>
            <person name="Tambunga G."/>
            <person name="Toriumi M.J."/>
            <person name="Town C.D."/>
            <person name="Utterback T."/>
            <person name="Van Aken S."/>
            <person name="Vaysberg M."/>
            <person name="Vysotskaia V.S."/>
            <person name="Walker M."/>
            <person name="Wu D."/>
            <person name="Yu G."/>
            <person name="Fraser C.M."/>
            <person name="Venter J.C."/>
            <person name="Davis R.W."/>
        </authorList>
    </citation>
    <scope>NUCLEOTIDE SEQUENCE [LARGE SCALE GENOMIC DNA]</scope>
    <source>
        <strain>cv. Columbia</strain>
    </source>
</reference>
<reference key="4">
    <citation type="journal article" date="2017" name="Plant J.">
        <title>Araport11: a complete reannotation of the Arabidopsis thaliana reference genome.</title>
        <authorList>
            <person name="Cheng C.Y."/>
            <person name="Krishnakumar V."/>
            <person name="Chan A.P."/>
            <person name="Thibaud-Nissen F."/>
            <person name="Schobel S."/>
            <person name="Town C.D."/>
        </authorList>
    </citation>
    <scope>GENOME REANNOTATION</scope>
    <source>
        <strain>cv. Columbia</strain>
    </source>
</reference>
<reference key="5">
    <citation type="journal article" date="2003" name="Science">
        <title>Empirical analysis of transcriptional activity in the Arabidopsis genome.</title>
        <authorList>
            <person name="Yamada K."/>
            <person name="Lim J."/>
            <person name="Dale J.M."/>
            <person name="Chen H."/>
            <person name="Shinn P."/>
            <person name="Palm C.J."/>
            <person name="Southwick A.M."/>
            <person name="Wu H.C."/>
            <person name="Kim C.J."/>
            <person name="Nguyen M."/>
            <person name="Pham P.K."/>
            <person name="Cheuk R.F."/>
            <person name="Karlin-Newmann G."/>
            <person name="Liu S.X."/>
            <person name="Lam B."/>
            <person name="Sakano H."/>
            <person name="Wu T."/>
            <person name="Yu G."/>
            <person name="Miranda M."/>
            <person name="Quach H.L."/>
            <person name="Tripp M."/>
            <person name="Chang C.H."/>
            <person name="Lee J.M."/>
            <person name="Toriumi M.J."/>
            <person name="Chan M.M."/>
            <person name="Tang C.C."/>
            <person name="Onodera C.S."/>
            <person name="Deng J.M."/>
            <person name="Akiyama K."/>
            <person name="Ansari Y."/>
            <person name="Arakawa T."/>
            <person name="Banh J."/>
            <person name="Banno F."/>
            <person name="Bowser L."/>
            <person name="Brooks S.Y."/>
            <person name="Carninci P."/>
            <person name="Chao Q."/>
            <person name="Choy N."/>
            <person name="Enju A."/>
            <person name="Goldsmith A.D."/>
            <person name="Gurjal M."/>
            <person name="Hansen N.F."/>
            <person name="Hayashizaki Y."/>
            <person name="Johnson-Hopson C."/>
            <person name="Hsuan V.W."/>
            <person name="Iida K."/>
            <person name="Karnes M."/>
            <person name="Khan S."/>
            <person name="Koesema E."/>
            <person name="Ishida J."/>
            <person name="Jiang P.X."/>
            <person name="Jones T."/>
            <person name="Kawai J."/>
            <person name="Kamiya A."/>
            <person name="Meyers C."/>
            <person name="Nakajima M."/>
            <person name="Narusaka M."/>
            <person name="Seki M."/>
            <person name="Sakurai T."/>
            <person name="Satou M."/>
            <person name="Tamse R."/>
            <person name="Vaysberg M."/>
            <person name="Wallender E.K."/>
            <person name="Wong C."/>
            <person name="Yamamura Y."/>
            <person name="Yuan S."/>
            <person name="Shinozaki K."/>
            <person name="Davis R.W."/>
            <person name="Theologis A."/>
            <person name="Ecker J.R."/>
        </authorList>
    </citation>
    <scope>NUCLEOTIDE SEQUENCE [LARGE SCALE MRNA]</scope>
    <source>
        <strain>cv. Columbia</strain>
    </source>
</reference>
<reference key="6">
    <citation type="journal article" date="2013" name="Plant J.">
        <title>BSKs are partially redundant positive regulators of brassinosteroid signaling in Arabidopsis.</title>
        <authorList>
            <person name="Sreeramulu S."/>
            <person name="Mostizky Y."/>
            <person name="Sunitha S."/>
            <person name="Shani E."/>
            <person name="Nahum H."/>
            <person name="Salomon D."/>
            <person name="Hayun L.B."/>
            <person name="Gruetter C."/>
            <person name="Rauh D."/>
            <person name="Ori N."/>
            <person name="Sessa G."/>
        </authorList>
    </citation>
    <scope>FUNCTION</scope>
    <scope>CATALYTIC ACTIVITY</scope>
    <scope>INTERACTION WITH BSK6</scope>
    <scope>MUTAGENESIS OF LYS-99</scope>
</reference>
<reference key="7">
    <citation type="journal article" date="2017" name="Mol. Cell">
        <title>The F-box protein KIB1 mediates brassinosteroid-induced inactivation and degradation of GSK3-like kinases in Arabidopsis.</title>
        <authorList>
            <person name="Zhu J.-Y."/>
            <person name="Li Y."/>
            <person name="Cao D.-M."/>
            <person name="Yang H."/>
            <person name="Oh E."/>
            <person name="Bi Y."/>
            <person name="Zhu S."/>
            <person name="Wang Z.-Y."/>
        </authorList>
    </citation>
    <scope>INTERACTION WITH KIB1</scope>
    <source>
        <strain>cv. Columbia</strain>
        <strain>cv. Wassilewskija</strain>
    </source>
</reference>